<organism>
    <name type="scientific">Deinagkistrodon acutus</name>
    <name type="common">Hundred-pace snake</name>
    <name type="synonym">Agkistrodon acutus</name>
    <dbReference type="NCBI Taxonomy" id="36307"/>
    <lineage>
        <taxon>Eukaryota</taxon>
        <taxon>Metazoa</taxon>
        <taxon>Chordata</taxon>
        <taxon>Craniata</taxon>
        <taxon>Vertebrata</taxon>
        <taxon>Euteleostomi</taxon>
        <taxon>Lepidosauria</taxon>
        <taxon>Squamata</taxon>
        <taxon>Bifurcata</taxon>
        <taxon>Unidentata</taxon>
        <taxon>Episquamata</taxon>
        <taxon>Toxicofera</taxon>
        <taxon>Serpentes</taxon>
        <taxon>Colubroidea</taxon>
        <taxon>Viperidae</taxon>
        <taxon>Crotalinae</taxon>
        <taxon>Deinagkistrodon</taxon>
    </lineage>
</organism>
<evidence type="ECO:0000250" key="1"/>
<evidence type="ECO:0000255" key="2"/>
<evidence type="ECO:0000255" key="3">
    <source>
        <dbReference type="PROSITE-ProRule" id="PRU00276"/>
    </source>
</evidence>
<evidence type="ECO:0000255" key="4">
    <source>
        <dbReference type="PROSITE-ProRule" id="PRU10095"/>
    </source>
</evidence>
<evidence type="ECO:0000305" key="5"/>
<name>VM1H3_DEIAC</name>
<proteinExistence type="evidence at transcript level"/>
<sequence length="400" mass="45281">FPYQGSSIILESGNVNDYEVVYPRKVTALPKGAVQQKYEDAMQYEFKVNGEPVVLHLEKNKGLFSKDYSEIHYSPDGRRITTHPLVEDHCYYRGHIRNDADSTASISACNGLKGHFKLRGETYLIEPMKISNSEAHAVYKYENVEKEDEAHKMCGVTQNWESYEPIKKASQLIVSTEFQKYMEIVIVVDHSMYTKHKGDSDKIKAWVYEMINTISESYRYLYIDIIVSALEMWSEKDLINVETSAENTLKSFGEWRAKDLIHRISHDNAQLLTATDFDGPTIGLAYVASMCDPKRSVGVVQDHSSVNHLVAITLAHEIAHNLGVHHDKSSCSCGSGYTCIMSPVINSEVIKYFSDCSYIQCREYISKENPPCILNKPLRTDTVSTPVSGNELLEAGKDYD</sequence>
<protein>
    <recommendedName>
        <fullName>Snake venom metalloproteinase H3</fullName>
        <shortName>SVMP</shortName>
        <ecNumber>3.4.24.-</ecNumber>
    </recommendedName>
</protein>
<comment type="function">
    <text evidence="1">Snake venom metalloproteinase that impairs hemostasis in the envenomed animal.</text>
</comment>
<comment type="cofactor">
    <cofactor evidence="1">
        <name>Zn(2+)</name>
        <dbReference type="ChEBI" id="CHEBI:29105"/>
    </cofactor>
    <text evidence="1">Binds 1 zinc ion per subunit.</text>
</comment>
<comment type="subunit">
    <text evidence="1">Monomer.</text>
</comment>
<comment type="subcellular location">
    <subcellularLocation>
        <location evidence="1">Secreted</location>
    </subcellularLocation>
</comment>
<comment type="tissue specificity">
    <text>Expressed by the venom gland.</text>
</comment>
<comment type="similarity">
    <text evidence="5">Belongs to the venom metalloproteinase (M12B) family. P-I subfamily.</text>
</comment>
<keyword id="KW-0106">Calcium</keyword>
<keyword id="KW-1015">Disulfide bond</keyword>
<keyword id="KW-1199">Hemostasis impairing toxin</keyword>
<keyword id="KW-0378">Hydrolase</keyword>
<keyword id="KW-0479">Metal-binding</keyword>
<keyword id="KW-0482">Metalloprotease</keyword>
<keyword id="KW-0645">Protease</keyword>
<keyword id="KW-0964">Secreted</keyword>
<keyword id="KW-0732">Signal</keyword>
<keyword id="KW-0800">Toxin</keyword>
<keyword id="KW-0862">Zinc</keyword>
<keyword id="KW-0865">Zymogen</keyword>
<accession>Q9IAY0</accession>
<dbReference type="EC" id="3.4.24.-"/>
<dbReference type="EMBL" id="AF099086">
    <property type="protein sequence ID" value="AAF61187.1"/>
    <property type="molecule type" value="mRNA"/>
</dbReference>
<dbReference type="SMR" id="Q9IAY0"/>
<dbReference type="MEROPS" id="M12.131"/>
<dbReference type="GO" id="GO:0005576">
    <property type="term" value="C:extracellular region"/>
    <property type="evidence" value="ECO:0007669"/>
    <property type="project" value="UniProtKB-SubCell"/>
</dbReference>
<dbReference type="GO" id="GO:0005886">
    <property type="term" value="C:plasma membrane"/>
    <property type="evidence" value="ECO:0007669"/>
    <property type="project" value="TreeGrafter"/>
</dbReference>
<dbReference type="GO" id="GO:0046872">
    <property type="term" value="F:metal ion binding"/>
    <property type="evidence" value="ECO:0007669"/>
    <property type="project" value="UniProtKB-KW"/>
</dbReference>
<dbReference type="GO" id="GO:0004222">
    <property type="term" value="F:metalloendopeptidase activity"/>
    <property type="evidence" value="ECO:0007669"/>
    <property type="project" value="InterPro"/>
</dbReference>
<dbReference type="GO" id="GO:0090729">
    <property type="term" value="F:toxin activity"/>
    <property type="evidence" value="ECO:0007669"/>
    <property type="project" value="UniProtKB-KW"/>
</dbReference>
<dbReference type="GO" id="GO:0006508">
    <property type="term" value="P:proteolysis"/>
    <property type="evidence" value="ECO:0007669"/>
    <property type="project" value="UniProtKB-KW"/>
</dbReference>
<dbReference type="CDD" id="cd04269">
    <property type="entry name" value="ZnMc_adamalysin_II_like"/>
    <property type="match status" value="1"/>
</dbReference>
<dbReference type="FunFam" id="3.40.390.10:FF:000002">
    <property type="entry name" value="Disintegrin and metalloproteinase domain-containing protein 22"/>
    <property type="match status" value="1"/>
</dbReference>
<dbReference type="Gene3D" id="3.40.390.10">
    <property type="entry name" value="Collagenase (Catalytic Domain)"/>
    <property type="match status" value="1"/>
</dbReference>
<dbReference type="InterPro" id="IPR024079">
    <property type="entry name" value="MetalloPept_cat_dom_sf"/>
</dbReference>
<dbReference type="InterPro" id="IPR001590">
    <property type="entry name" value="Peptidase_M12B"/>
</dbReference>
<dbReference type="InterPro" id="IPR002870">
    <property type="entry name" value="Peptidase_M12B_N"/>
</dbReference>
<dbReference type="InterPro" id="IPR034027">
    <property type="entry name" value="Reprolysin_adamalysin"/>
</dbReference>
<dbReference type="PANTHER" id="PTHR11905">
    <property type="entry name" value="ADAM A DISINTEGRIN AND METALLOPROTEASE DOMAIN"/>
    <property type="match status" value="1"/>
</dbReference>
<dbReference type="PANTHER" id="PTHR11905:SF32">
    <property type="entry name" value="DISINTEGRIN AND METALLOPROTEINASE DOMAIN-CONTAINING PROTEIN 28"/>
    <property type="match status" value="1"/>
</dbReference>
<dbReference type="Pfam" id="PF01562">
    <property type="entry name" value="Pep_M12B_propep"/>
    <property type="match status" value="1"/>
</dbReference>
<dbReference type="Pfam" id="PF01421">
    <property type="entry name" value="Reprolysin"/>
    <property type="match status" value="1"/>
</dbReference>
<dbReference type="SUPFAM" id="SSF55486">
    <property type="entry name" value="Metalloproteases ('zincins'), catalytic domain"/>
    <property type="match status" value="1"/>
</dbReference>
<dbReference type="PROSITE" id="PS50215">
    <property type="entry name" value="ADAM_MEPRO"/>
    <property type="match status" value="1"/>
</dbReference>
<dbReference type="PROSITE" id="PS00142">
    <property type="entry name" value="ZINC_PROTEASE"/>
    <property type="match status" value="1"/>
</dbReference>
<reference key="1">
    <citation type="journal article" date="2000" name="Eur. J. Biochem.">
        <title>Purification, cloning and sequence analyses for pro-metalloprotease-disintegrin variants from Deinagkistrodon acutus venom and subclassification of the small venom metalloproteases.</title>
        <authorList>
            <person name="Tsai I.-H."/>
            <person name="Wang Y.-M."/>
            <person name="Chiang T.-Y."/>
            <person name="Chen Y.-L."/>
            <person name="Huang R.-J."/>
        </authorList>
    </citation>
    <scope>NUCLEOTIDE SEQUENCE [MRNA]</scope>
    <source>
        <tissue>Venom gland</tissue>
    </source>
</reference>
<feature type="signal peptide" evidence="2">
    <location>
        <begin position="1" status="less than"/>
        <end position="6"/>
    </location>
</feature>
<feature type="propeptide" id="PRO_0000322619" evidence="1">
    <location>
        <begin position="7"/>
        <end position="176"/>
    </location>
</feature>
<feature type="chain" id="PRO_0000322620" description="Snake venom metalloproteinase H3">
    <location>
        <begin position="177"/>
        <end position="377"/>
    </location>
</feature>
<feature type="propeptide" id="PRO_0000322621" evidence="1">
    <location>
        <begin position="378"/>
        <end position="400"/>
    </location>
</feature>
<feature type="domain" description="Peptidase M12B" evidence="3">
    <location>
        <begin position="180"/>
        <end position="377"/>
    </location>
</feature>
<feature type="active site" evidence="3 4">
    <location>
        <position position="317"/>
    </location>
</feature>
<feature type="binding site" evidence="1">
    <location>
        <position position="183"/>
    </location>
    <ligand>
        <name>Ca(2+)</name>
        <dbReference type="ChEBI" id="CHEBI:29108"/>
        <label>1</label>
    </ligand>
</feature>
<feature type="binding site" evidence="1">
    <location>
        <position position="267"/>
    </location>
    <ligand>
        <name>Ca(2+)</name>
        <dbReference type="ChEBI" id="CHEBI:29108"/>
        <label>1</label>
    </ligand>
</feature>
<feature type="binding site" evidence="1">
    <location>
        <position position="316"/>
    </location>
    <ligand>
        <name>Zn(2+)</name>
        <dbReference type="ChEBI" id="CHEBI:29105"/>
        <note>catalytic</note>
    </ligand>
</feature>
<feature type="binding site" evidence="1">
    <location>
        <position position="320"/>
    </location>
    <ligand>
        <name>Zn(2+)</name>
        <dbReference type="ChEBI" id="CHEBI:29105"/>
        <note>catalytic</note>
    </ligand>
</feature>
<feature type="binding site" evidence="1">
    <location>
        <position position="326"/>
    </location>
    <ligand>
        <name>Zn(2+)</name>
        <dbReference type="ChEBI" id="CHEBI:29105"/>
        <note>catalytic</note>
    </ligand>
</feature>
<feature type="binding site" evidence="1">
    <location>
        <position position="372"/>
    </location>
    <ligand>
        <name>Ca(2+)</name>
        <dbReference type="ChEBI" id="CHEBI:29108"/>
        <label>1</label>
    </ligand>
</feature>
<feature type="binding site" evidence="1">
    <location>
        <position position="375"/>
    </location>
    <ligand>
        <name>Ca(2+)</name>
        <dbReference type="ChEBI" id="CHEBI:29108"/>
        <label>1</label>
    </ligand>
</feature>
<feature type="binding site" evidence="1">
    <location>
        <position position="387"/>
    </location>
    <ligand>
        <name>Ca(2+)</name>
        <dbReference type="ChEBI" id="CHEBI:29108"/>
        <label>2</label>
    </ligand>
</feature>
<feature type="binding site" evidence="1">
    <location>
        <position position="390"/>
    </location>
    <ligand>
        <name>Ca(2+)</name>
        <dbReference type="ChEBI" id="CHEBI:29108"/>
        <label>2</label>
    </ligand>
</feature>
<feature type="binding site" evidence="1">
    <location>
        <position position="392"/>
    </location>
    <ligand>
        <name>Ca(2+)</name>
        <dbReference type="ChEBI" id="CHEBI:29108"/>
        <label>2</label>
    </ligand>
</feature>
<feature type="binding site" evidence="1">
    <location>
        <position position="394"/>
    </location>
    <ligand>
        <name>Ca(2+)</name>
        <dbReference type="ChEBI" id="CHEBI:29108"/>
        <label>2</label>
    </ligand>
</feature>
<feature type="binding site" evidence="1">
    <location>
        <position position="400"/>
    </location>
    <ligand>
        <name>Ca(2+)</name>
        <dbReference type="ChEBI" id="CHEBI:29108"/>
        <label>2</label>
    </ligand>
</feature>
<feature type="disulfide bond" evidence="3">
    <location>
        <begin position="291"/>
        <end position="372"/>
    </location>
</feature>
<feature type="disulfide bond" evidence="3">
    <location>
        <begin position="331"/>
        <end position="356"/>
    </location>
</feature>
<feature type="disulfide bond" evidence="3">
    <location>
        <begin position="333"/>
        <end position="339"/>
    </location>
</feature>
<feature type="non-terminal residue">
    <location>
        <position position="1"/>
    </location>
</feature>